<feature type="chain" id="PRO_1000090022" description="Probable tRNA sulfurtransferase">
    <location>
        <begin position="1"/>
        <end position="381"/>
    </location>
</feature>
<feature type="domain" description="THUMP" evidence="1">
    <location>
        <begin position="55"/>
        <end position="163"/>
    </location>
</feature>
<feature type="binding site" evidence="1">
    <location>
        <begin position="181"/>
        <end position="182"/>
    </location>
    <ligand>
        <name>ATP</name>
        <dbReference type="ChEBI" id="CHEBI:30616"/>
    </ligand>
</feature>
<feature type="binding site" evidence="1">
    <location>
        <position position="265"/>
    </location>
    <ligand>
        <name>ATP</name>
        <dbReference type="ChEBI" id="CHEBI:30616"/>
    </ligand>
</feature>
<feature type="binding site" evidence="1">
    <location>
        <position position="287"/>
    </location>
    <ligand>
        <name>ATP</name>
        <dbReference type="ChEBI" id="CHEBI:30616"/>
    </ligand>
</feature>
<feature type="binding site" evidence="1">
    <location>
        <position position="296"/>
    </location>
    <ligand>
        <name>ATP</name>
        <dbReference type="ChEBI" id="CHEBI:30616"/>
    </ligand>
</feature>
<proteinExistence type="inferred from homology"/>
<protein>
    <recommendedName>
        <fullName evidence="1">Probable tRNA sulfurtransferase</fullName>
        <ecNumber evidence="1">2.8.1.4</ecNumber>
    </recommendedName>
    <alternativeName>
        <fullName evidence="1">Sulfur carrier protein ThiS sulfurtransferase</fullName>
    </alternativeName>
    <alternativeName>
        <fullName evidence="1">Thiamine biosynthesis protein ThiI</fullName>
    </alternativeName>
    <alternativeName>
        <fullName evidence="1">tRNA 4-thiouridine synthase</fullName>
    </alternativeName>
</protein>
<accession>A5UKU4</accession>
<dbReference type="EC" id="2.8.1.4" evidence="1"/>
<dbReference type="EMBL" id="CP000678">
    <property type="protein sequence ID" value="ABQ86822.1"/>
    <property type="molecule type" value="Genomic_DNA"/>
</dbReference>
<dbReference type="RefSeq" id="WP_004036532.1">
    <property type="nucleotide sequence ID" value="NZ_CP117965.1"/>
</dbReference>
<dbReference type="SMR" id="A5UKU4"/>
<dbReference type="STRING" id="420247.Msm_0617"/>
<dbReference type="EnsemblBacteria" id="ABQ86822">
    <property type="protein sequence ID" value="ABQ86822"/>
    <property type="gene ID" value="Msm_0617"/>
</dbReference>
<dbReference type="GeneID" id="78817244"/>
<dbReference type="KEGG" id="msi:Msm_0617"/>
<dbReference type="PATRIC" id="fig|420247.28.peg.614"/>
<dbReference type="eggNOG" id="arCOG00038">
    <property type="taxonomic scope" value="Archaea"/>
</dbReference>
<dbReference type="HOGENOM" id="CLU_037952_4_0_2"/>
<dbReference type="UniPathway" id="UPA00060"/>
<dbReference type="Proteomes" id="UP000001992">
    <property type="component" value="Chromosome"/>
</dbReference>
<dbReference type="GO" id="GO:0005829">
    <property type="term" value="C:cytosol"/>
    <property type="evidence" value="ECO:0007669"/>
    <property type="project" value="TreeGrafter"/>
</dbReference>
<dbReference type="GO" id="GO:0005524">
    <property type="term" value="F:ATP binding"/>
    <property type="evidence" value="ECO:0007669"/>
    <property type="project" value="UniProtKB-UniRule"/>
</dbReference>
<dbReference type="GO" id="GO:0004810">
    <property type="term" value="F:CCA tRNA nucleotidyltransferase activity"/>
    <property type="evidence" value="ECO:0007669"/>
    <property type="project" value="InterPro"/>
</dbReference>
<dbReference type="GO" id="GO:0000049">
    <property type="term" value="F:tRNA binding"/>
    <property type="evidence" value="ECO:0007669"/>
    <property type="project" value="UniProtKB-UniRule"/>
</dbReference>
<dbReference type="GO" id="GO:0140741">
    <property type="term" value="F:tRNA-uracil-4 sulfurtransferase activity"/>
    <property type="evidence" value="ECO:0007669"/>
    <property type="project" value="UniProtKB-EC"/>
</dbReference>
<dbReference type="GO" id="GO:0009228">
    <property type="term" value="P:thiamine biosynthetic process"/>
    <property type="evidence" value="ECO:0007669"/>
    <property type="project" value="UniProtKB-KW"/>
</dbReference>
<dbReference type="GO" id="GO:0009229">
    <property type="term" value="P:thiamine diphosphate biosynthetic process"/>
    <property type="evidence" value="ECO:0007669"/>
    <property type="project" value="UniProtKB-UniRule"/>
</dbReference>
<dbReference type="GO" id="GO:0052837">
    <property type="term" value="P:thiazole biosynthetic process"/>
    <property type="evidence" value="ECO:0007669"/>
    <property type="project" value="TreeGrafter"/>
</dbReference>
<dbReference type="GO" id="GO:0002937">
    <property type="term" value="P:tRNA 4-thiouridine biosynthesis"/>
    <property type="evidence" value="ECO:0007669"/>
    <property type="project" value="TreeGrafter"/>
</dbReference>
<dbReference type="CDD" id="cd01712">
    <property type="entry name" value="PPase_ThiI"/>
    <property type="match status" value="1"/>
</dbReference>
<dbReference type="CDD" id="cd11716">
    <property type="entry name" value="THUMP_ThiI"/>
    <property type="match status" value="1"/>
</dbReference>
<dbReference type="Gene3D" id="3.30.2130.30">
    <property type="match status" value="1"/>
</dbReference>
<dbReference type="Gene3D" id="3.40.50.620">
    <property type="entry name" value="HUPs"/>
    <property type="match status" value="1"/>
</dbReference>
<dbReference type="HAMAP" id="MF_00021">
    <property type="entry name" value="ThiI"/>
    <property type="match status" value="1"/>
</dbReference>
<dbReference type="InterPro" id="IPR014729">
    <property type="entry name" value="Rossmann-like_a/b/a_fold"/>
</dbReference>
<dbReference type="InterPro" id="IPR020536">
    <property type="entry name" value="ThiI_AANH"/>
</dbReference>
<dbReference type="InterPro" id="IPR054173">
    <property type="entry name" value="ThiI_fer"/>
</dbReference>
<dbReference type="InterPro" id="IPR049961">
    <property type="entry name" value="ThiI_N"/>
</dbReference>
<dbReference type="InterPro" id="IPR004114">
    <property type="entry name" value="THUMP_dom"/>
</dbReference>
<dbReference type="InterPro" id="IPR049962">
    <property type="entry name" value="THUMP_ThiI"/>
</dbReference>
<dbReference type="InterPro" id="IPR003720">
    <property type="entry name" value="tRNA_STrfase"/>
</dbReference>
<dbReference type="InterPro" id="IPR050102">
    <property type="entry name" value="tRNA_sulfurtransferase_ThiI"/>
</dbReference>
<dbReference type="NCBIfam" id="TIGR00342">
    <property type="entry name" value="tRNA uracil 4-sulfurtransferase ThiI"/>
    <property type="match status" value="1"/>
</dbReference>
<dbReference type="PANTHER" id="PTHR43209">
    <property type="entry name" value="TRNA SULFURTRANSFERASE"/>
    <property type="match status" value="1"/>
</dbReference>
<dbReference type="PANTHER" id="PTHR43209:SF1">
    <property type="entry name" value="TRNA SULFURTRANSFERASE"/>
    <property type="match status" value="1"/>
</dbReference>
<dbReference type="Pfam" id="PF02568">
    <property type="entry name" value="ThiI"/>
    <property type="match status" value="1"/>
</dbReference>
<dbReference type="Pfam" id="PF22025">
    <property type="entry name" value="ThiI_fer"/>
    <property type="match status" value="1"/>
</dbReference>
<dbReference type="Pfam" id="PF02926">
    <property type="entry name" value="THUMP"/>
    <property type="match status" value="1"/>
</dbReference>
<dbReference type="SMART" id="SM00981">
    <property type="entry name" value="THUMP"/>
    <property type="match status" value="1"/>
</dbReference>
<dbReference type="SUPFAM" id="SSF52402">
    <property type="entry name" value="Adenine nucleotide alpha hydrolases-like"/>
    <property type="match status" value="1"/>
</dbReference>
<dbReference type="SUPFAM" id="SSF143437">
    <property type="entry name" value="THUMP domain-like"/>
    <property type="match status" value="1"/>
</dbReference>
<dbReference type="PROSITE" id="PS51165">
    <property type="entry name" value="THUMP"/>
    <property type="match status" value="1"/>
</dbReference>
<keyword id="KW-0067">ATP-binding</keyword>
<keyword id="KW-0963">Cytoplasm</keyword>
<keyword id="KW-0547">Nucleotide-binding</keyword>
<keyword id="KW-0694">RNA-binding</keyword>
<keyword id="KW-0784">Thiamine biosynthesis</keyword>
<keyword id="KW-0808">Transferase</keyword>
<keyword id="KW-0820">tRNA-binding</keyword>
<sequence length="381" mass="41960">MNYDVVIARYGEIGLKSSKVRARFERKLVKNIKAAIDCEVDRNQGRIYIFPKNYGECLENLNKVFGVVSYSPAVSTYGNYEDIEKTLGEYVDNLVDDGFIGKDTRFAIKCRRVGNHDFTSQEMAAFCGSVVVKKVGCPVDLTNPELKIYVEVRDDEAFIYHEKIDGPGGLPLGTQGKVVVLVSSGIDSPVAAYLMMKRGCEVIALHCDNAPFTGPKVHENFDKIIDQLQSYAKGVPITKKVVKYGEYLQQAKDCAPEKMTCVLCKSGMYKIAEKLAHKYGASAIVDGSSVGQVASQTLSNILATRHGVDMPILSPLIGLDKLEITRIAEDIGTFEISKLDDGGCHAVPKYPETKADVDRVEEACRAMNQKEAIEKAFDSID</sequence>
<gene>
    <name evidence="1" type="primary">thiI</name>
    <name type="ordered locus">Msm_0617</name>
</gene>
<name>THII_METS3</name>
<organism>
    <name type="scientific">Methanobrevibacter smithii (strain ATCC 35061 / DSM 861 / OCM 144 / PS)</name>
    <dbReference type="NCBI Taxonomy" id="420247"/>
    <lineage>
        <taxon>Archaea</taxon>
        <taxon>Methanobacteriati</taxon>
        <taxon>Methanobacteriota</taxon>
        <taxon>Methanomada group</taxon>
        <taxon>Methanobacteria</taxon>
        <taxon>Methanobacteriales</taxon>
        <taxon>Methanobacteriaceae</taxon>
        <taxon>Methanobrevibacter</taxon>
    </lineage>
</organism>
<comment type="function">
    <text evidence="1">Catalyzes the ATP-dependent transfer of a sulfur to tRNA to produce 4-thiouridine in position 8 of tRNAs, which functions as a near-UV photosensor. Also catalyzes the transfer of sulfur to the sulfur carrier protein ThiS, forming ThiS-thiocarboxylate. This is a step in the synthesis of thiazole, in the thiamine biosynthesis pathway. The sulfur is donated as persulfide by IscS.</text>
</comment>
<comment type="catalytic activity">
    <reaction evidence="1">
        <text>[ThiI sulfur-carrier protein]-S-sulfanyl-L-cysteine + a uridine in tRNA + 2 reduced [2Fe-2S]-[ferredoxin] + ATP + H(+) = [ThiI sulfur-carrier protein]-L-cysteine + a 4-thiouridine in tRNA + 2 oxidized [2Fe-2S]-[ferredoxin] + AMP + diphosphate</text>
        <dbReference type="Rhea" id="RHEA:24176"/>
        <dbReference type="Rhea" id="RHEA-COMP:10000"/>
        <dbReference type="Rhea" id="RHEA-COMP:10001"/>
        <dbReference type="Rhea" id="RHEA-COMP:13337"/>
        <dbReference type="Rhea" id="RHEA-COMP:13338"/>
        <dbReference type="Rhea" id="RHEA-COMP:13339"/>
        <dbReference type="Rhea" id="RHEA-COMP:13340"/>
        <dbReference type="ChEBI" id="CHEBI:15378"/>
        <dbReference type="ChEBI" id="CHEBI:29950"/>
        <dbReference type="ChEBI" id="CHEBI:30616"/>
        <dbReference type="ChEBI" id="CHEBI:33019"/>
        <dbReference type="ChEBI" id="CHEBI:33737"/>
        <dbReference type="ChEBI" id="CHEBI:33738"/>
        <dbReference type="ChEBI" id="CHEBI:61963"/>
        <dbReference type="ChEBI" id="CHEBI:65315"/>
        <dbReference type="ChEBI" id="CHEBI:136798"/>
        <dbReference type="ChEBI" id="CHEBI:456215"/>
        <dbReference type="EC" id="2.8.1.4"/>
    </reaction>
</comment>
<comment type="catalytic activity">
    <reaction evidence="1">
        <text>[ThiS sulfur-carrier protein]-C-terminal Gly-Gly-AMP + S-sulfanyl-L-cysteinyl-[cysteine desulfurase] + AH2 = [ThiS sulfur-carrier protein]-C-terminal-Gly-aminoethanethioate + L-cysteinyl-[cysteine desulfurase] + A + AMP + 2 H(+)</text>
        <dbReference type="Rhea" id="RHEA:43340"/>
        <dbReference type="Rhea" id="RHEA-COMP:12157"/>
        <dbReference type="Rhea" id="RHEA-COMP:12158"/>
        <dbReference type="Rhea" id="RHEA-COMP:12910"/>
        <dbReference type="Rhea" id="RHEA-COMP:19908"/>
        <dbReference type="ChEBI" id="CHEBI:13193"/>
        <dbReference type="ChEBI" id="CHEBI:15378"/>
        <dbReference type="ChEBI" id="CHEBI:17499"/>
        <dbReference type="ChEBI" id="CHEBI:29950"/>
        <dbReference type="ChEBI" id="CHEBI:61963"/>
        <dbReference type="ChEBI" id="CHEBI:90618"/>
        <dbReference type="ChEBI" id="CHEBI:232372"/>
        <dbReference type="ChEBI" id="CHEBI:456215"/>
    </reaction>
</comment>
<comment type="pathway">
    <text evidence="1">Cofactor biosynthesis; thiamine diphosphate biosynthesis.</text>
</comment>
<comment type="subcellular location">
    <subcellularLocation>
        <location evidence="1">Cytoplasm</location>
    </subcellularLocation>
</comment>
<comment type="similarity">
    <text evidence="1">Belongs to the ThiI family.</text>
</comment>
<evidence type="ECO:0000255" key="1">
    <source>
        <dbReference type="HAMAP-Rule" id="MF_00021"/>
    </source>
</evidence>
<reference key="1">
    <citation type="journal article" date="2007" name="Proc. Natl. Acad. Sci. U.S.A.">
        <title>Genomic and metabolic adaptations of Methanobrevibacter smithii to the human gut.</title>
        <authorList>
            <person name="Samuel B.S."/>
            <person name="Hansen E.E."/>
            <person name="Manchester J.K."/>
            <person name="Coutinho P.M."/>
            <person name="Henrissat B."/>
            <person name="Fulton R."/>
            <person name="Latreille P."/>
            <person name="Kim K."/>
            <person name="Wilson R.K."/>
            <person name="Gordon J.I."/>
        </authorList>
    </citation>
    <scope>NUCLEOTIDE SEQUENCE [LARGE SCALE GENOMIC DNA]</scope>
    <source>
        <strain>ATCC 35061 / DSM 861 / OCM 144 / PS</strain>
    </source>
</reference>